<protein>
    <recommendedName>
        <fullName>Nuclear transcription factor Y subunit gamma</fullName>
    </recommendedName>
    <alternativeName>
        <fullName>Nuclear transcription factor Y subunit C</fullName>
        <shortName>NF-YC</shortName>
    </alternativeName>
</protein>
<accession>Q557I1</accession>
<accession>Q8SSZ4</accession>
<reference key="1">
    <citation type="journal article" date="2002" name="Nature">
        <title>Sequence and analysis of chromosome 2 of Dictyostelium discoideum.</title>
        <authorList>
            <person name="Gloeckner G."/>
            <person name="Eichinger L."/>
            <person name="Szafranski K."/>
            <person name="Pachebat J.A."/>
            <person name="Bankier A.T."/>
            <person name="Dear P.H."/>
            <person name="Lehmann R."/>
            <person name="Baumgart C."/>
            <person name="Parra G."/>
            <person name="Abril J.F."/>
            <person name="Guigo R."/>
            <person name="Kumpf K."/>
            <person name="Tunggal B."/>
            <person name="Cox E.C."/>
            <person name="Quail M.A."/>
            <person name="Platzer M."/>
            <person name="Rosenthal A."/>
            <person name="Noegel A.A."/>
        </authorList>
    </citation>
    <scope>NUCLEOTIDE SEQUENCE [LARGE SCALE GENOMIC DNA]</scope>
    <source>
        <strain>AX4</strain>
    </source>
</reference>
<reference key="2">
    <citation type="journal article" date="2005" name="Nature">
        <title>The genome of the social amoeba Dictyostelium discoideum.</title>
        <authorList>
            <person name="Eichinger L."/>
            <person name="Pachebat J.A."/>
            <person name="Gloeckner G."/>
            <person name="Rajandream M.A."/>
            <person name="Sucgang R."/>
            <person name="Berriman M."/>
            <person name="Song J."/>
            <person name="Olsen R."/>
            <person name="Szafranski K."/>
            <person name="Xu Q."/>
            <person name="Tunggal B."/>
            <person name="Kummerfeld S."/>
            <person name="Madera M."/>
            <person name="Konfortov B.A."/>
            <person name="Rivero F."/>
            <person name="Bankier A.T."/>
            <person name="Lehmann R."/>
            <person name="Hamlin N."/>
            <person name="Davies R."/>
            <person name="Gaudet P."/>
            <person name="Fey P."/>
            <person name="Pilcher K."/>
            <person name="Chen G."/>
            <person name="Saunders D."/>
            <person name="Sodergren E.J."/>
            <person name="Davis P."/>
            <person name="Kerhornou A."/>
            <person name="Nie X."/>
            <person name="Hall N."/>
            <person name="Anjard C."/>
            <person name="Hemphill L."/>
            <person name="Bason N."/>
            <person name="Farbrother P."/>
            <person name="Desany B."/>
            <person name="Just E."/>
            <person name="Morio T."/>
            <person name="Rost R."/>
            <person name="Churcher C.M."/>
            <person name="Cooper J."/>
            <person name="Haydock S."/>
            <person name="van Driessche N."/>
            <person name="Cronin A."/>
            <person name="Goodhead I."/>
            <person name="Muzny D.M."/>
            <person name="Mourier T."/>
            <person name="Pain A."/>
            <person name="Lu M."/>
            <person name="Harper D."/>
            <person name="Lindsay R."/>
            <person name="Hauser H."/>
            <person name="James K.D."/>
            <person name="Quiles M."/>
            <person name="Madan Babu M."/>
            <person name="Saito T."/>
            <person name="Buchrieser C."/>
            <person name="Wardroper A."/>
            <person name="Felder M."/>
            <person name="Thangavelu M."/>
            <person name="Johnson D."/>
            <person name="Knights A."/>
            <person name="Loulseged H."/>
            <person name="Mungall K.L."/>
            <person name="Oliver K."/>
            <person name="Price C."/>
            <person name="Quail M.A."/>
            <person name="Urushihara H."/>
            <person name="Hernandez J."/>
            <person name="Rabbinowitsch E."/>
            <person name="Steffen D."/>
            <person name="Sanders M."/>
            <person name="Ma J."/>
            <person name="Kohara Y."/>
            <person name="Sharp S."/>
            <person name="Simmonds M.N."/>
            <person name="Spiegler S."/>
            <person name="Tivey A."/>
            <person name="Sugano S."/>
            <person name="White B."/>
            <person name="Walker D."/>
            <person name="Woodward J.R."/>
            <person name="Winckler T."/>
            <person name="Tanaka Y."/>
            <person name="Shaulsky G."/>
            <person name="Schleicher M."/>
            <person name="Weinstock G.M."/>
            <person name="Rosenthal A."/>
            <person name="Cox E.C."/>
            <person name="Chisholm R.L."/>
            <person name="Gibbs R.A."/>
            <person name="Loomis W.F."/>
            <person name="Platzer M."/>
            <person name="Kay R.R."/>
            <person name="Williams J.G."/>
            <person name="Dear P.H."/>
            <person name="Noegel A.A."/>
            <person name="Barrell B.G."/>
            <person name="Kuspa A."/>
        </authorList>
    </citation>
    <scope>NUCLEOTIDE SEQUENCE [LARGE SCALE GENOMIC DNA]</scope>
    <source>
        <strain>AX4</strain>
    </source>
</reference>
<proteinExistence type="inferred from homology"/>
<comment type="function">
    <text evidence="1">Stimulates the transcription of various genes by recognizing and binding to a CCAAT motif in promoters.</text>
</comment>
<comment type="subunit">
    <text evidence="1">Heterotrimeric transcription factor composed of three components, NF-YA, NF-YB and NF-YC. NF-YB and NF-YC must interact and dimerize for NF-YA association and DNA binding (By similarity).</text>
</comment>
<comment type="subcellular location">
    <subcellularLocation>
        <location evidence="1">Nucleus</location>
    </subcellularLocation>
</comment>
<comment type="similarity">
    <text evidence="3">Belongs to the NFYC/HAP5 subunit family.</text>
</comment>
<comment type="caution">
    <text evidence="3">The gene for this protein is duplicated in strains AX3 and AX4. These strains contain a duplication of a segment of 750 kb of chromosome 2 compared to the corresponding sequence in strain AX2.</text>
</comment>
<sequence length="684" mass="78054">MENQIHSLLHFPSSASTGSTSNSHNNHHNNNNNNNYNNNNNNNINNINNNHHHHHNYKSIQQHSPHSSTPNISTENVDIYSSHEANSSNGYNNGNNFSYSMNGNFNYNFSPMNSPHHSHNHPDTSNNNMLPLNDSGIHFNQHQHPSSASSSSSSSSSSLSSSSHHHHSNHHHHHPNLHINLPPIPQYPSLNDSSSNGNGTPALSSPSSTTPHPTTPHPTTPTSTPNQRFQSNGSSSFQNQLQNHLENKLSSFWSSQLRDIHKTEDFKTHELPLARIKKIMKSDKDVNKISSEAPILFAKACEILILEMTHRSWVHTEMNKRRTLQRTDIINSLSRCETFDFLIDMLPRDEIKPSRKYLDELSKAQVITPEYLQYLQLQQMATENQQKNNQNNQNNQNKNNQQILPQQRNLNIPHSPQLQEQSSNNNNNNNNNNNNNNSVSVKRSYSMEIQNSSPLSTPKKRSNSQDYNFQYNENNHNQSSLSQTQQLQQLNQQQQQQQQQQQQQQQQQQQQQQQHSQQISQQIHHIPTPSNSSSSLPPLPPHNSNHAHNNNNNNNNNNNNNNNNNLNNNNNNNNNNNNNNNNNNNNNNNNNNNNNNNNNNNNNNNNNNNNNNNNNNNNNNNNNNNNNNNNNNNNNNNTFDYSFNDSKNDEHKVSLNESNFISTPTNDNIISSSPSSQVYYYSDN</sequence>
<feature type="chain" id="PRO_0000328559" description="Nuclear transcription factor Y subunit gamma">
    <location>
        <begin position="1"/>
        <end position="684"/>
    </location>
</feature>
<feature type="region of interest" description="Disordered" evidence="2">
    <location>
        <begin position="1"/>
        <end position="74"/>
    </location>
</feature>
<feature type="region of interest" description="Disordered" evidence="2">
    <location>
        <begin position="112"/>
        <end position="238"/>
    </location>
</feature>
<feature type="region of interest" description="Disordered" evidence="2">
    <location>
        <begin position="414"/>
        <end position="487"/>
    </location>
</feature>
<feature type="region of interest" description="Disordered" evidence="2">
    <location>
        <begin position="511"/>
        <end position="650"/>
    </location>
</feature>
<feature type="compositionally biased region" description="Low complexity" evidence="2">
    <location>
        <begin position="21"/>
        <end position="49"/>
    </location>
</feature>
<feature type="compositionally biased region" description="Polar residues" evidence="2">
    <location>
        <begin position="58"/>
        <end position="74"/>
    </location>
</feature>
<feature type="compositionally biased region" description="Low complexity" evidence="2">
    <location>
        <begin position="142"/>
        <end position="162"/>
    </location>
</feature>
<feature type="compositionally biased region" description="Basic residues" evidence="2">
    <location>
        <begin position="163"/>
        <end position="176"/>
    </location>
</feature>
<feature type="compositionally biased region" description="Polar residues" evidence="2">
    <location>
        <begin position="188"/>
        <end position="203"/>
    </location>
</feature>
<feature type="compositionally biased region" description="Low complexity" evidence="2">
    <location>
        <begin position="220"/>
        <end position="238"/>
    </location>
</feature>
<feature type="compositionally biased region" description="Polar residues" evidence="2">
    <location>
        <begin position="414"/>
        <end position="423"/>
    </location>
</feature>
<feature type="compositionally biased region" description="Low complexity" evidence="2">
    <location>
        <begin position="424"/>
        <end position="437"/>
    </location>
</feature>
<feature type="compositionally biased region" description="Polar residues" evidence="2">
    <location>
        <begin position="438"/>
        <end position="456"/>
    </location>
</feature>
<feature type="compositionally biased region" description="Polar residues" evidence="2">
    <location>
        <begin position="464"/>
        <end position="477"/>
    </location>
</feature>
<feature type="compositionally biased region" description="Low complexity" evidence="2">
    <location>
        <begin position="478"/>
        <end position="487"/>
    </location>
</feature>
<feature type="compositionally biased region" description="Low complexity" evidence="2">
    <location>
        <begin position="511"/>
        <end position="522"/>
    </location>
</feature>
<feature type="compositionally biased region" description="Low complexity" evidence="2">
    <location>
        <begin position="529"/>
        <end position="637"/>
    </location>
</feature>
<evidence type="ECO:0000250" key="1"/>
<evidence type="ECO:0000256" key="2">
    <source>
        <dbReference type="SAM" id="MobiDB-lite"/>
    </source>
</evidence>
<evidence type="ECO:0000305" key="3"/>
<dbReference type="EMBL" id="AAFI02000010">
    <property type="protein sequence ID" value="EAL70694.1"/>
    <property type="molecule type" value="Genomic_DNA"/>
</dbReference>
<dbReference type="EMBL" id="AAFI02000010">
    <property type="protein sequence ID" value="EAL70727.1"/>
    <property type="molecule type" value="Genomic_DNA"/>
</dbReference>
<dbReference type="RefSeq" id="XP_644597.1">
    <property type="nucleotide sequence ID" value="XM_639505.1"/>
</dbReference>
<dbReference type="RefSeq" id="XP_644654.1">
    <property type="nucleotide sequence ID" value="XM_639562.1"/>
</dbReference>
<dbReference type="SMR" id="Q557I1"/>
<dbReference type="FunCoup" id="Q557I1">
    <property type="interactions" value="364"/>
</dbReference>
<dbReference type="STRING" id="44689.Q557I1"/>
<dbReference type="PaxDb" id="44689-DDB0220097"/>
<dbReference type="EnsemblProtists" id="EAL70694">
    <property type="protein sequence ID" value="EAL70694"/>
    <property type="gene ID" value="DDB_G0273479"/>
</dbReference>
<dbReference type="EnsemblProtists" id="EAL70727">
    <property type="protein sequence ID" value="EAL70727"/>
    <property type="gene ID" value="DDB_G0273545"/>
</dbReference>
<dbReference type="GeneID" id="8618961"/>
<dbReference type="GeneID" id="8619016"/>
<dbReference type="KEGG" id="ddi:DDB_G0273479"/>
<dbReference type="KEGG" id="ddi:DDB_G0273545"/>
<dbReference type="dictyBase" id="DDB_G0273479">
    <property type="gene designation" value="nfyC-1"/>
</dbReference>
<dbReference type="dictyBase" id="DDB_G0273545">
    <property type="gene designation" value="nfyC-2"/>
</dbReference>
<dbReference type="VEuPathDB" id="AmoebaDB:DDB_G0273545"/>
<dbReference type="eggNOG" id="KOG1657">
    <property type="taxonomic scope" value="Eukaryota"/>
</dbReference>
<dbReference type="HOGENOM" id="CLU_402509_0_0_1"/>
<dbReference type="InParanoid" id="Q557I1"/>
<dbReference type="OMA" id="NIQMANN"/>
<dbReference type="PRO" id="PR:Q557I1"/>
<dbReference type="Proteomes" id="UP000002195">
    <property type="component" value="Chromosome 2"/>
</dbReference>
<dbReference type="GO" id="GO:0016602">
    <property type="term" value="C:CCAAT-binding factor complex"/>
    <property type="evidence" value="ECO:0000250"/>
    <property type="project" value="dictyBase"/>
</dbReference>
<dbReference type="GO" id="GO:0005634">
    <property type="term" value="C:nucleus"/>
    <property type="evidence" value="ECO:0000318"/>
    <property type="project" value="GO_Central"/>
</dbReference>
<dbReference type="GO" id="GO:0003677">
    <property type="term" value="F:DNA binding"/>
    <property type="evidence" value="ECO:0007669"/>
    <property type="project" value="UniProtKB-KW"/>
</dbReference>
<dbReference type="GO" id="GO:0001228">
    <property type="term" value="F:DNA-binding transcription activator activity, RNA polymerase II-specific"/>
    <property type="evidence" value="ECO:0000318"/>
    <property type="project" value="GO_Central"/>
</dbReference>
<dbReference type="GO" id="GO:0046982">
    <property type="term" value="F:protein heterodimerization activity"/>
    <property type="evidence" value="ECO:0007669"/>
    <property type="project" value="InterPro"/>
</dbReference>
<dbReference type="GO" id="GO:0006357">
    <property type="term" value="P:regulation of transcription by RNA polymerase II"/>
    <property type="evidence" value="ECO:0000318"/>
    <property type="project" value="GO_Central"/>
</dbReference>
<dbReference type="CDD" id="cd22908">
    <property type="entry name" value="HFD_NFYC-like"/>
    <property type="match status" value="1"/>
</dbReference>
<dbReference type="FunFam" id="1.10.20.10:FF:000006">
    <property type="entry name" value="Nuclear transcription factor Y subunit gamma"/>
    <property type="match status" value="1"/>
</dbReference>
<dbReference type="Gene3D" id="1.10.20.10">
    <property type="entry name" value="Histone, subunit A"/>
    <property type="match status" value="1"/>
</dbReference>
<dbReference type="InterPro" id="IPR003958">
    <property type="entry name" value="CBFA_NFYB_domain"/>
</dbReference>
<dbReference type="InterPro" id="IPR009072">
    <property type="entry name" value="Histone-fold"/>
</dbReference>
<dbReference type="InterPro" id="IPR050568">
    <property type="entry name" value="Transcr_DNA_Rep_Reg"/>
</dbReference>
<dbReference type="PANTHER" id="PTHR10252">
    <property type="entry name" value="HISTONE-LIKE TRANSCRIPTION FACTOR CCAAT-RELATED"/>
    <property type="match status" value="1"/>
</dbReference>
<dbReference type="PANTHER" id="PTHR10252:SF8">
    <property type="entry name" value="NUCLEAR TRANSCRIPTION FACTOR Y SUBUNIT GAMMA"/>
    <property type="match status" value="1"/>
</dbReference>
<dbReference type="Pfam" id="PF00808">
    <property type="entry name" value="CBFD_NFYB_HMF"/>
    <property type="match status" value="1"/>
</dbReference>
<dbReference type="SUPFAM" id="SSF47113">
    <property type="entry name" value="Histone-fold"/>
    <property type="match status" value="1"/>
</dbReference>
<organism>
    <name type="scientific">Dictyostelium discoideum</name>
    <name type="common">Social amoeba</name>
    <dbReference type="NCBI Taxonomy" id="44689"/>
    <lineage>
        <taxon>Eukaryota</taxon>
        <taxon>Amoebozoa</taxon>
        <taxon>Evosea</taxon>
        <taxon>Eumycetozoa</taxon>
        <taxon>Dictyostelia</taxon>
        <taxon>Dictyosteliales</taxon>
        <taxon>Dictyosteliaceae</taxon>
        <taxon>Dictyostelium</taxon>
    </lineage>
</organism>
<keyword id="KW-0010">Activator</keyword>
<keyword id="KW-0238">DNA-binding</keyword>
<keyword id="KW-0539">Nucleus</keyword>
<keyword id="KW-1185">Reference proteome</keyword>
<keyword id="KW-0804">Transcription</keyword>
<keyword id="KW-0805">Transcription regulation</keyword>
<gene>
    <name type="primary">nfyc-1</name>
    <name type="ORF">DDB_G0273479</name>
</gene>
<gene>
    <name type="primary">nfyc-2</name>
    <name type="ORF">DDB_G0273545</name>
</gene>
<name>NFYC_DICDI</name>